<proteinExistence type="inferred from homology"/>
<organism>
    <name type="scientific">Acinetobacter baumannii (strain ATCC 17978 / DSM 105126 / CIP 53.77 / LMG 1025 / NCDC KC755 / 5377)</name>
    <dbReference type="NCBI Taxonomy" id="400667"/>
    <lineage>
        <taxon>Bacteria</taxon>
        <taxon>Pseudomonadati</taxon>
        <taxon>Pseudomonadota</taxon>
        <taxon>Gammaproteobacteria</taxon>
        <taxon>Moraxellales</taxon>
        <taxon>Moraxellaceae</taxon>
        <taxon>Acinetobacter</taxon>
        <taxon>Acinetobacter calcoaceticus/baumannii complex</taxon>
    </lineage>
</organism>
<dbReference type="EMBL" id="CP000521">
    <property type="protein sequence ID" value="ABO12600.1"/>
    <property type="molecule type" value="Genomic_DNA"/>
</dbReference>
<dbReference type="RefSeq" id="WP_000382591.1">
    <property type="nucleotide sequence ID" value="NZ_CP053098.1"/>
</dbReference>
<dbReference type="SMR" id="A3M6Q6"/>
<dbReference type="GeneID" id="92894415"/>
<dbReference type="KEGG" id="acb:A1S_2173"/>
<dbReference type="HOGENOM" id="CLU_078938_4_1_6"/>
<dbReference type="GO" id="GO:1990904">
    <property type="term" value="C:ribonucleoprotein complex"/>
    <property type="evidence" value="ECO:0007669"/>
    <property type="project" value="UniProtKB-KW"/>
</dbReference>
<dbReference type="GO" id="GO:0005840">
    <property type="term" value="C:ribosome"/>
    <property type="evidence" value="ECO:0007669"/>
    <property type="project" value="UniProtKB-KW"/>
</dbReference>
<dbReference type="GO" id="GO:0019843">
    <property type="term" value="F:rRNA binding"/>
    <property type="evidence" value="ECO:0007669"/>
    <property type="project" value="UniProtKB-UniRule"/>
</dbReference>
<dbReference type="GO" id="GO:0003735">
    <property type="term" value="F:structural constituent of ribosome"/>
    <property type="evidence" value="ECO:0007669"/>
    <property type="project" value="InterPro"/>
</dbReference>
<dbReference type="GO" id="GO:0006412">
    <property type="term" value="P:translation"/>
    <property type="evidence" value="ECO:0007669"/>
    <property type="project" value="UniProtKB-UniRule"/>
</dbReference>
<dbReference type="Gene3D" id="3.10.430.100">
    <property type="entry name" value="Ribosomal protein L9, C-terminal domain"/>
    <property type="match status" value="1"/>
</dbReference>
<dbReference type="Gene3D" id="3.40.5.10">
    <property type="entry name" value="Ribosomal protein L9, N-terminal domain"/>
    <property type="match status" value="1"/>
</dbReference>
<dbReference type="HAMAP" id="MF_00503">
    <property type="entry name" value="Ribosomal_bL9"/>
    <property type="match status" value="1"/>
</dbReference>
<dbReference type="InterPro" id="IPR000244">
    <property type="entry name" value="Ribosomal_bL9"/>
</dbReference>
<dbReference type="InterPro" id="IPR009027">
    <property type="entry name" value="Ribosomal_bL9/RNase_H1_N"/>
</dbReference>
<dbReference type="InterPro" id="IPR020594">
    <property type="entry name" value="Ribosomal_bL9_bac/chp"/>
</dbReference>
<dbReference type="InterPro" id="IPR020069">
    <property type="entry name" value="Ribosomal_bL9_C"/>
</dbReference>
<dbReference type="InterPro" id="IPR036791">
    <property type="entry name" value="Ribosomal_bL9_C_sf"/>
</dbReference>
<dbReference type="InterPro" id="IPR020070">
    <property type="entry name" value="Ribosomal_bL9_N"/>
</dbReference>
<dbReference type="InterPro" id="IPR036935">
    <property type="entry name" value="Ribosomal_bL9_N_sf"/>
</dbReference>
<dbReference type="NCBIfam" id="TIGR00158">
    <property type="entry name" value="L9"/>
    <property type="match status" value="1"/>
</dbReference>
<dbReference type="PANTHER" id="PTHR21368">
    <property type="entry name" value="50S RIBOSOMAL PROTEIN L9"/>
    <property type="match status" value="1"/>
</dbReference>
<dbReference type="Pfam" id="PF03948">
    <property type="entry name" value="Ribosomal_L9_C"/>
    <property type="match status" value="1"/>
</dbReference>
<dbReference type="Pfam" id="PF01281">
    <property type="entry name" value="Ribosomal_L9_N"/>
    <property type="match status" value="1"/>
</dbReference>
<dbReference type="SUPFAM" id="SSF55658">
    <property type="entry name" value="L9 N-domain-like"/>
    <property type="match status" value="1"/>
</dbReference>
<dbReference type="SUPFAM" id="SSF55653">
    <property type="entry name" value="Ribosomal protein L9 C-domain"/>
    <property type="match status" value="1"/>
</dbReference>
<dbReference type="PROSITE" id="PS00651">
    <property type="entry name" value="RIBOSOMAL_L9"/>
    <property type="match status" value="1"/>
</dbReference>
<protein>
    <recommendedName>
        <fullName evidence="1">Large ribosomal subunit protein bL9</fullName>
    </recommendedName>
    <alternativeName>
        <fullName evidence="2">50S ribosomal protein L9</fullName>
    </alternativeName>
</protein>
<accession>A3M6Q6</accession>
<reference key="1">
    <citation type="journal article" date="2007" name="Genes Dev.">
        <title>New insights into Acinetobacter baumannii pathogenesis revealed by high-density pyrosequencing and transposon mutagenesis.</title>
        <authorList>
            <person name="Smith M.G."/>
            <person name="Gianoulis T.A."/>
            <person name="Pukatzki S."/>
            <person name="Mekalanos J.J."/>
            <person name="Ornston L.N."/>
            <person name="Gerstein M."/>
            <person name="Snyder M."/>
        </authorList>
    </citation>
    <scope>NUCLEOTIDE SEQUENCE [LARGE SCALE GENOMIC DNA]</scope>
    <source>
        <strain>ATCC 17978 / DSM 105126 / CIP 53.77 / LMG 1025 / NCDC KC755 / 5377</strain>
    </source>
</reference>
<name>RL9_ACIBT</name>
<keyword id="KW-0687">Ribonucleoprotein</keyword>
<keyword id="KW-0689">Ribosomal protein</keyword>
<keyword id="KW-0694">RNA-binding</keyword>
<keyword id="KW-0699">rRNA-binding</keyword>
<evidence type="ECO:0000255" key="1">
    <source>
        <dbReference type="HAMAP-Rule" id="MF_00503"/>
    </source>
</evidence>
<evidence type="ECO:0000305" key="2"/>
<sequence>MDVILLQRIKNLGKLGDKVSVKAGYGRNFLIPQGKAVAATEANTAAFEARRAELEKQEAEVLAAAQARAEQLNEVNIVITAKAGDEGKLFGSIGTRDIADALTNAGLTVDRAEVRLPNGALRHTGEFNIAIQLHHDVVAEVLVTIVSE</sequence>
<gene>
    <name evidence="1" type="primary">rplI</name>
    <name type="ordered locus">A1S_2173</name>
</gene>
<feature type="chain" id="PRO_1000014727" description="Large ribosomal subunit protein bL9">
    <location>
        <begin position="1"/>
        <end position="148"/>
    </location>
</feature>
<comment type="function">
    <text evidence="1">Binds to the 23S rRNA.</text>
</comment>
<comment type="similarity">
    <text evidence="1">Belongs to the bacterial ribosomal protein bL9 family.</text>
</comment>